<dbReference type="EMBL" id="AE016822">
    <property type="protein sequence ID" value="AAT89724.1"/>
    <property type="molecule type" value="Genomic_DNA"/>
</dbReference>
<dbReference type="RefSeq" id="WP_011186710.1">
    <property type="nucleotide sequence ID" value="NC_006087.1"/>
</dbReference>
<dbReference type="SMR" id="Q6AD20"/>
<dbReference type="STRING" id="281090.Lxx20090"/>
<dbReference type="KEGG" id="lxx:Lxx20090"/>
<dbReference type="eggNOG" id="COG0100">
    <property type="taxonomic scope" value="Bacteria"/>
</dbReference>
<dbReference type="HOGENOM" id="CLU_072439_5_0_11"/>
<dbReference type="Proteomes" id="UP000001306">
    <property type="component" value="Chromosome"/>
</dbReference>
<dbReference type="GO" id="GO:1990904">
    <property type="term" value="C:ribonucleoprotein complex"/>
    <property type="evidence" value="ECO:0007669"/>
    <property type="project" value="UniProtKB-KW"/>
</dbReference>
<dbReference type="GO" id="GO:0005840">
    <property type="term" value="C:ribosome"/>
    <property type="evidence" value="ECO:0007669"/>
    <property type="project" value="UniProtKB-KW"/>
</dbReference>
<dbReference type="GO" id="GO:0019843">
    <property type="term" value="F:rRNA binding"/>
    <property type="evidence" value="ECO:0007669"/>
    <property type="project" value="UniProtKB-UniRule"/>
</dbReference>
<dbReference type="GO" id="GO:0003735">
    <property type="term" value="F:structural constituent of ribosome"/>
    <property type="evidence" value="ECO:0007669"/>
    <property type="project" value="InterPro"/>
</dbReference>
<dbReference type="GO" id="GO:0006412">
    <property type="term" value="P:translation"/>
    <property type="evidence" value="ECO:0007669"/>
    <property type="project" value="UniProtKB-UniRule"/>
</dbReference>
<dbReference type="FunFam" id="3.30.420.80:FF:000001">
    <property type="entry name" value="30S ribosomal protein S11"/>
    <property type="match status" value="1"/>
</dbReference>
<dbReference type="Gene3D" id="3.30.420.80">
    <property type="entry name" value="Ribosomal protein S11"/>
    <property type="match status" value="1"/>
</dbReference>
<dbReference type="HAMAP" id="MF_01310">
    <property type="entry name" value="Ribosomal_uS11"/>
    <property type="match status" value="1"/>
</dbReference>
<dbReference type="InterPro" id="IPR001971">
    <property type="entry name" value="Ribosomal_uS11"/>
</dbReference>
<dbReference type="InterPro" id="IPR019981">
    <property type="entry name" value="Ribosomal_uS11_bac-type"/>
</dbReference>
<dbReference type="InterPro" id="IPR018102">
    <property type="entry name" value="Ribosomal_uS11_CS"/>
</dbReference>
<dbReference type="InterPro" id="IPR036967">
    <property type="entry name" value="Ribosomal_uS11_sf"/>
</dbReference>
<dbReference type="NCBIfam" id="NF003698">
    <property type="entry name" value="PRK05309.1"/>
    <property type="match status" value="1"/>
</dbReference>
<dbReference type="NCBIfam" id="TIGR03632">
    <property type="entry name" value="uS11_bact"/>
    <property type="match status" value="1"/>
</dbReference>
<dbReference type="PANTHER" id="PTHR11759">
    <property type="entry name" value="40S RIBOSOMAL PROTEIN S14/30S RIBOSOMAL PROTEIN S11"/>
    <property type="match status" value="1"/>
</dbReference>
<dbReference type="Pfam" id="PF00411">
    <property type="entry name" value="Ribosomal_S11"/>
    <property type="match status" value="1"/>
</dbReference>
<dbReference type="PIRSF" id="PIRSF002131">
    <property type="entry name" value="Ribosomal_S11"/>
    <property type="match status" value="1"/>
</dbReference>
<dbReference type="SUPFAM" id="SSF53137">
    <property type="entry name" value="Translational machinery components"/>
    <property type="match status" value="1"/>
</dbReference>
<dbReference type="PROSITE" id="PS00054">
    <property type="entry name" value="RIBOSOMAL_S11"/>
    <property type="match status" value="1"/>
</dbReference>
<accession>Q6AD20</accession>
<organism>
    <name type="scientific">Leifsonia xyli subsp. xyli (strain CTCB07)</name>
    <dbReference type="NCBI Taxonomy" id="281090"/>
    <lineage>
        <taxon>Bacteria</taxon>
        <taxon>Bacillati</taxon>
        <taxon>Actinomycetota</taxon>
        <taxon>Actinomycetes</taxon>
        <taxon>Micrococcales</taxon>
        <taxon>Microbacteriaceae</taxon>
        <taxon>Leifsonia</taxon>
    </lineage>
</organism>
<sequence length="132" mass="13893">MAAPKSAARKPRKKEKKNIAVGQAHIKSTFNNTIVSITDTTGAVLSWASSGGVGFKGSRKSTPYAAQLAAESAARQAQEHGMKKVDVFVKGPGSGRETAIRSLQAAGLEVGSINDVTPQAHNGCRPPKRRRV</sequence>
<evidence type="ECO:0000255" key="1">
    <source>
        <dbReference type="HAMAP-Rule" id="MF_01310"/>
    </source>
</evidence>
<evidence type="ECO:0000305" key="2"/>
<gene>
    <name evidence="1" type="primary">rpsK</name>
    <name type="ordered locus">Lxx20090</name>
</gene>
<name>RS11_LEIXX</name>
<comment type="function">
    <text evidence="1">Located on the platform of the 30S subunit, it bridges several disparate RNA helices of the 16S rRNA. Forms part of the Shine-Dalgarno cleft in the 70S ribosome.</text>
</comment>
<comment type="subunit">
    <text evidence="1">Part of the 30S ribosomal subunit. Interacts with proteins S7 and S18. Binds to IF-3.</text>
</comment>
<comment type="similarity">
    <text evidence="1">Belongs to the universal ribosomal protein uS11 family.</text>
</comment>
<reference key="1">
    <citation type="journal article" date="2004" name="Mol. Plant Microbe Interact.">
        <title>The genome sequence of the Gram-positive sugarcane pathogen Leifsonia xyli subsp. xyli.</title>
        <authorList>
            <person name="Monteiro-Vitorello C.B."/>
            <person name="Camargo L.E.A."/>
            <person name="Van Sluys M.A."/>
            <person name="Kitajima J.P."/>
            <person name="Truffi D."/>
            <person name="do Amaral A.M."/>
            <person name="Harakava R."/>
            <person name="de Oliveira J.C.F."/>
            <person name="Wood D."/>
            <person name="de Oliveira M.C."/>
            <person name="Miyaki C.Y."/>
            <person name="Takita M.A."/>
            <person name="da Silva A.C.R."/>
            <person name="Furlan L.R."/>
            <person name="Carraro D.M."/>
            <person name="Camarotte G."/>
            <person name="Almeida N.F. Jr."/>
            <person name="Carrer H."/>
            <person name="Coutinho L.L."/>
            <person name="El-Dorry H.A."/>
            <person name="Ferro M.I.T."/>
            <person name="Gagliardi P.R."/>
            <person name="Giglioti E."/>
            <person name="Goldman M.H.S."/>
            <person name="Goldman G.H."/>
            <person name="Kimura E.T."/>
            <person name="Ferro E.S."/>
            <person name="Kuramae E.E."/>
            <person name="Lemos E.G.M."/>
            <person name="Lemos M.V.F."/>
            <person name="Mauro S.M.Z."/>
            <person name="Machado M.A."/>
            <person name="Marino C.L."/>
            <person name="Menck C.F."/>
            <person name="Nunes L.R."/>
            <person name="Oliveira R.C."/>
            <person name="Pereira G.G."/>
            <person name="Siqueira W."/>
            <person name="de Souza A.A."/>
            <person name="Tsai S.M."/>
            <person name="Zanca A.S."/>
            <person name="Simpson A.J.G."/>
            <person name="Brumbley S.M."/>
            <person name="Setubal J.C."/>
        </authorList>
    </citation>
    <scope>NUCLEOTIDE SEQUENCE [LARGE SCALE GENOMIC DNA]</scope>
    <source>
        <strain>CTCB07</strain>
    </source>
</reference>
<feature type="chain" id="PRO_0000123166" description="Small ribosomal subunit protein uS11">
    <location>
        <begin position="1"/>
        <end position="132"/>
    </location>
</feature>
<proteinExistence type="inferred from homology"/>
<keyword id="KW-1185">Reference proteome</keyword>
<keyword id="KW-0687">Ribonucleoprotein</keyword>
<keyword id="KW-0689">Ribosomal protein</keyword>
<keyword id="KW-0694">RNA-binding</keyword>
<keyword id="KW-0699">rRNA-binding</keyword>
<protein>
    <recommendedName>
        <fullName evidence="1">Small ribosomal subunit protein uS11</fullName>
    </recommendedName>
    <alternativeName>
        <fullName evidence="2">30S ribosomal protein S11</fullName>
    </alternativeName>
</protein>